<protein>
    <recommendedName>
        <fullName>RNA-binding protein YhbY</fullName>
    </recommendedName>
</protein>
<reference key="1">
    <citation type="submission" date="1993-09" db="EMBL/GenBank/DDBJ databases">
        <title>Identification and physical analysis of new genes in the argG region (69 min) of Escherichia coli chromosome.</title>
        <authorList>
            <person name="Wang R."/>
            <person name="Kushner S.R."/>
        </authorList>
    </citation>
    <scope>NUCLEOTIDE SEQUENCE [GENOMIC DNA]</scope>
    <source>
        <strain>K12</strain>
    </source>
</reference>
<reference key="2">
    <citation type="journal article" date="1997" name="Science">
        <title>The complete genome sequence of Escherichia coli K-12.</title>
        <authorList>
            <person name="Blattner F.R."/>
            <person name="Plunkett G. III"/>
            <person name="Bloch C.A."/>
            <person name="Perna N.T."/>
            <person name="Burland V."/>
            <person name="Riley M."/>
            <person name="Collado-Vides J."/>
            <person name="Glasner J.D."/>
            <person name="Rode C.K."/>
            <person name="Mayhew G.F."/>
            <person name="Gregor J."/>
            <person name="Davis N.W."/>
            <person name="Kirkpatrick H.A."/>
            <person name="Goeden M.A."/>
            <person name="Rose D.J."/>
            <person name="Mau B."/>
            <person name="Shao Y."/>
        </authorList>
    </citation>
    <scope>NUCLEOTIDE SEQUENCE [LARGE SCALE GENOMIC DNA]</scope>
    <source>
        <strain>K12 / MG1655 / ATCC 47076</strain>
    </source>
</reference>
<reference key="3">
    <citation type="journal article" date="2006" name="Mol. Syst. Biol.">
        <title>Highly accurate genome sequences of Escherichia coli K-12 strains MG1655 and W3110.</title>
        <authorList>
            <person name="Hayashi K."/>
            <person name="Morooka N."/>
            <person name="Yamamoto Y."/>
            <person name="Fujita K."/>
            <person name="Isono K."/>
            <person name="Choi S."/>
            <person name="Ohtsubo E."/>
            <person name="Baba T."/>
            <person name="Wanner B.L."/>
            <person name="Mori H."/>
            <person name="Horiuchi T."/>
        </authorList>
    </citation>
    <scope>NUCLEOTIDE SEQUENCE [LARGE SCALE GENOMIC DNA]</scope>
    <source>
        <strain>K12 / W3110 / ATCC 27325 / DSM 5911</strain>
    </source>
</reference>
<reference key="4">
    <citation type="journal article" date="1990" name="Nucleic Acids Res.">
        <title>The nucleotide sequence of greA, a suppressor gene that restores growth of an Escherichia coli RNA polymerase mutant at high temperature.</title>
        <authorList>
            <person name="Sparkowski J."/>
            <person name="Das A."/>
        </authorList>
    </citation>
    <scope>NUCLEOTIDE SEQUENCE [GENOMIC DNA] OF 64-97</scope>
</reference>
<reference key="5">
    <citation type="journal article" date="2006" name="J. Bacteriol.">
        <title>The Escherichia coli GTPase CgtAE is involved in late steps of large ribosome assembly.</title>
        <authorList>
            <person name="Jiang M."/>
            <person name="Datta K."/>
            <person name="Walker A."/>
            <person name="Strahler J."/>
            <person name="Bagamasbad P."/>
            <person name="Andrews P.C."/>
            <person name="Maddock J.R."/>
        </authorList>
    </citation>
    <scope>IDENTIFICATION BY MASS SPECTROMETRY</scope>
    <scope>SUBCELLULAR LOCATION</scope>
    <scope>ASSOCIATION WITH THE 50S RIBOSOMAL SUBUNIT</scope>
    <source>
        <strain>K12 / MG1655 / ATCC 47076</strain>
    </source>
</reference>
<reference key="6">
    <citation type="journal article" date="2021" name="Mol. Cell">
        <title>Snapshots of native pre-50S ribosomes reveal a biogenesis factor network and evolutionary specialization.</title>
        <authorList>
            <person name="Nikolay R."/>
            <person name="Hilal T."/>
            <person name="Schmidt S."/>
            <person name="Qin B."/>
            <person name="Schwefel D."/>
            <person name="Vieira-Vieira C.H."/>
            <person name="Mielke T."/>
            <person name="Burger J."/>
            <person name="Loerke J."/>
            <person name="Amikura K."/>
            <person name="Flugel T."/>
            <person name="Ueda T."/>
            <person name="Selbach M."/>
            <person name="Deuerling E."/>
            <person name="Spahn C.M.T."/>
        </authorList>
    </citation>
    <scope>IDENTIFICATION BY MASS SPECTROMETRY</scope>
    <scope>SUBCELLULAR LOCATION</scope>
    <scope>ASSOCIATION WITH THE 50S RIBOSOMAL SUBUNIT</scope>
    <source>
        <strain>K12 / MG1655 / ATCC 47076</strain>
    </source>
</reference>
<reference evidence="4" key="7">
    <citation type="journal article" date="2002" name="Structure">
        <title>Crystal structure of E. coli YhbY: a representative of a novel class of RNA binding proteins.</title>
        <authorList>
            <person name="Ostheimer G.J."/>
            <person name="Barkan A."/>
            <person name="Matthews B.W."/>
        </authorList>
    </citation>
    <scope>X-RAY CRYSTALLOGRAPHY (1.5 ANGSTROMS) OF 5-104</scope>
</reference>
<name>YHBY_ECOLI</name>
<sequence length="97" mass="10784">MNLSTKQKQHLKGLAHPLKPVVLLGSNGLTEGVLAEIEQALEHHELIKVKIATEDRETKTLIVEAIVRETGACNVQVIGKTLVLYRPTKERKISLPR</sequence>
<evidence type="ECO:0000255" key="1">
    <source>
        <dbReference type="PROSITE-ProRule" id="PRU00626"/>
    </source>
</evidence>
<evidence type="ECO:0000269" key="2">
    <source>
    </source>
</evidence>
<evidence type="ECO:0000269" key="3">
    <source>
    </source>
</evidence>
<evidence type="ECO:0000312" key="4">
    <source>
        <dbReference type="PDB" id="1LN4"/>
    </source>
</evidence>
<evidence type="ECO:0007829" key="5">
    <source>
        <dbReference type="PDB" id="1LN4"/>
    </source>
</evidence>
<gene>
    <name type="primary">yhbY</name>
    <name type="ordered locus">b3180</name>
    <name type="ordered locus">JW3147</name>
</gene>
<comment type="interaction">
    <interactant intactId="EBI-543346">
        <id>P0AGK4</id>
    </interactant>
    <interactant intactId="EBI-545468">
        <id>P0AG30</id>
        <label>rho</label>
    </interactant>
    <organismsDiffer>false</organismsDiffer>
    <experiments>3</experiments>
</comment>
<comment type="subcellular location">
    <subcellularLocation>
        <location evidence="2 3">Cytoplasm</location>
    </subcellularLocation>
    <text evidence="2 3">Comigrates with the pre-50S ribosomal subunit (PubMed:16980477, PubMed:33639093).</text>
</comment>
<keyword id="KW-0002">3D-structure</keyword>
<keyword id="KW-0963">Cytoplasm</keyword>
<keyword id="KW-1185">Reference proteome</keyword>
<keyword id="KW-0694">RNA-binding</keyword>
<accession>P0AGK4</accession>
<accession>P42550</accession>
<accession>Q2M932</accession>
<feature type="chain" id="PRO_0000202163" description="RNA-binding protein YhbY">
    <location>
        <begin position="1"/>
        <end position="97"/>
    </location>
</feature>
<feature type="domain" description="CRM" evidence="1">
    <location>
        <begin position="1"/>
        <end position="97"/>
    </location>
</feature>
<feature type="helix" evidence="5">
    <location>
        <begin position="5"/>
        <end position="15"/>
    </location>
</feature>
<feature type="strand" evidence="5">
    <location>
        <begin position="21"/>
        <end position="24"/>
    </location>
</feature>
<feature type="helix" evidence="5">
    <location>
        <begin position="31"/>
        <end position="44"/>
    </location>
</feature>
<feature type="strand" evidence="5">
    <location>
        <begin position="45"/>
        <end position="51"/>
    </location>
</feature>
<feature type="helix" evidence="5">
    <location>
        <begin position="56"/>
        <end position="70"/>
    </location>
</feature>
<feature type="strand" evidence="5">
    <location>
        <begin position="73"/>
        <end position="78"/>
    </location>
</feature>
<feature type="strand" evidence="5">
    <location>
        <begin position="81"/>
        <end position="85"/>
    </location>
</feature>
<proteinExistence type="evidence at protein level"/>
<dbReference type="EMBL" id="U01376">
    <property type="status" value="NOT_ANNOTATED_CDS"/>
    <property type="molecule type" value="Genomic_DNA"/>
</dbReference>
<dbReference type="EMBL" id="U18997">
    <property type="protein sequence ID" value="AAA57981.1"/>
    <property type="molecule type" value="Genomic_DNA"/>
</dbReference>
<dbReference type="EMBL" id="U00096">
    <property type="protein sequence ID" value="AAC76212.1"/>
    <property type="molecule type" value="Genomic_DNA"/>
</dbReference>
<dbReference type="EMBL" id="AP009048">
    <property type="protein sequence ID" value="BAE77224.1"/>
    <property type="molecule type" value="Genomic_DNA"/>
</dbReference>
<dbReference type="EMBL" id="X54718">
    <property type="status" value="NOT_ANNOTATED_CDS"/>
    <property type="molecule type" value="Genomic_DNA"/>
</dbReference>
<dbReference type="PIR" id="F65108">
    <property type="entry name" value="F65108"/>
</dbReference>
<dbReference type="RefSeq" id="NP_417647.1">
    <property type="nucleotide sequence ID" value="NC_000913.3"/>
</dbReference>
<dbReference type="RefSeq" id="WP_001054420.1">
    <property type="nucleotide sequence ID" value="NZ_STEB01000012.1"/>
</dbReference>
<dbReference type="PDB" id="1LN4">
    <property type="method" value="X-ray"/>
    <property type="resolution" value="1.50 A"/>
    <property type="chains" value="A=3-97"/>
</dbReference>
<dbReference type="PDBsum" id="1LN4"/>
<dbReference type="SMR" id="P0AGK4"/>
<dbReference type="BioGRID" id="4261795">
    <property type="interactions" value="41"/>
</dbReference>
<dbReference type="BioGRID" id="852001">
    <property type="interactions" value="2"/>
</dbReference>
<dbReference type="DIP" id="DIP-47893N"/>
<dbReference type="FunCoup" id="P0AGK4">
    <property type="interactions" value="377"/>
</dbReference>
<dbReference type="IntAct" id="P0AGK4">
    <property type="interactions" value="44"/>
</dbReference>
<dbReference type="STRING" id="511145.b3180"/>
<dbReference type="jPOST" id="P0AGK4"/>
<dbReference type="PaxDb" id="511145-b3180"/>
<dbReference type="EnsemblBacteria" id="AAC76212">
    <property type="protein sequence ID" value="AAC76212"/>
    <property type="gene ID" value="b3180"/>
</dbReference>
<dbReference type="GeneID" id="93778801"/>
<dbReference type="GeneID" id="947688"/>
<dbReference type="KEGG" id="ecj:JW3147"/>
<dbReference type="KEGG" id="eco:b3180"/>
<dbReference type="KEGG" id="ecoc:C3026_17315"/>
<dbReference type="PATRIC" id="fig|1411691.4.peg.3552"/>
<dbReference type="EchoBASE" id="EB2646"/>
<dbReference type="eggNOG" id="COG1534">
    <property type="taxonomic scope" value="Bacteria"/>
</dbReference>
<dbReference type="HOGENOM" id="CLU_095994_2_0_6"/>
<dbReference type="InParanoid" id="P0AGK4"/>
<dbReference type="OMA" id="KMALIYR"/>
<dbReference type="OrthoDB" id="9797519at2"/>
<dbReference type="PhylomeDB" id="P0AGK4"/>
<dbReference type="BioCyc" id="EcoCyc:EG12794-MONOMER"/>
<dbReference type="EvolutionaryTrace" id="P0AGK4"/>
<dbReference type="PRO" id="PR:P0AGK4"/>
<dbReference type="Proteomes" id="UP000000625">
    <property type="component" value="Chromosome"/>
</dbReference>
<dbReference type="GO" id="GO:0005829">
    <property type="term" value="C:cytosol"/>
    <property type="evidence" value="ECO:0000314"/>
    <property type="project" value="EcoCyc"/>
</dbReference>
<dbReference type="GO" id="GO:1990275">
    <property type="term" value="F:preribosome binding"/>
    <property type="evidence" value="ECO:0000314"/>
    <property type="project" value="EcoCyc"/>
</dbReference>
<dbReference type="GO" id="GO:0003723">
    <property type="term" value="F:RNA binding"/>
    <property type="evidence" value="ECO:0007669"/>
    <property type="project" value="UniProtKB-KW"/>
</dbReference>
<dbReference type="GO" id="GO:0000027">
    <property type="term" value="P:ribosomal large subunit assembly"/>
    <property type="evidence" value="ECO:0000315"/>
    <property type="project" value="EcoCyc"/>
</dbReference>
<dbReference type="GO" id="GO:0000028">
    <property type="term" value="P:ribosomal small subunit assembly"/>
    <property type="evidence" value="ECO:0000315"/>
    <property type="project" value="EcoCyc"/>
</dbReference>
<dbReference type="GO" id="GO:0000967">
    <property type="term" value="P:rRNA 5'-end processing"/>
    <property type="evidence" value="ECO:0000315"/>
    <property type="project" value="EcoCyc"/>
</dbReference>
<dbReference type="FunFam" id="3.30.110.60:FF:000001">
    <property type="entry name" value="RNA-binding protein YhbY"/>
    <property type="match status" value="1"/>
</dbReference>
<dbReference type="Gene3D" id="3.30.110.60">
    <property type="entry name" value="YhbY-like"/>
    <property type="match status" value="1"/>
</dbReference>
<dbReference type="InterPro" id="IPR001890">
    <property type="entry name" value="RNA-binding_CRM"/>
</dbReference>
<dbReference type="InterPro" id="IPR051925">
    <property type="entry name" value="RNA-binding_domain"/>
</dbReference>
<dbReference type="InterPro" id="IPR017924">
    <property type="entry name" value="RNA-binding_YhbY"/>
</dbReference>
<dbReference type="InterPro" id="IPR035920">
    <property type="entry name" value="YhbY-like_sf"/>
</dbReference>
<dbReference type="NCBIfam" id="NF007669">
    <property type="entry name" value="PRK10343.1"/>
    <property type="match status" value="1"/>
</dbReference>
<dbReference type="NCBIfam" id="TIGR00253">
    <property type="entry name" value="RNA_bind_YhbY"/>
    <property type="match status" value="1"/>
</dbReference>
<dbReference type="PANTHER" id="PTHR40065">
    <property type="entry name" value="RNA-BINDING PROTEIN YHBY"/>
    <property type="match status" value="1"/>
</dbReference>
<dbReference type="PANTHER" id="PTHR40065:SF3">
    <property type="entry name" value="RNA-BINDING PROTEIN YHBY"/>
    <property type="match status" value="1"/>
</dbReference>
<dbReference type="Pfam" id="PF01985">
    <property type="entry name" value="CRS1_YhbY"/>
    <property type="match status" value="1"/>
</dbReference>
<dbReference type="SMART" id="SM01103">
    <property type="entry name" value="CRS1_YhbY"/>
    <property type="match status" value="1"/>
</dbReference>
<dbReference type="SUPFAM" id="SSF75471">
    <property type="entry name" value="YhbY-like"/>
    <property type="match status" value="1"/>
</dbReference>
<dbReference type="PROSITE" id="PS51295">
    <property type="entry name" value="CRM"/>
    <property type="match status" value="1"/>
</dbReference>
<organism>
    <name type="scientific">Escherichia coli (strain K12)</name>
    <dbReference type="NCBI Taxonomy" id="83333"/>
    <lineage>
        <taxon>Bacteria</taxon>
        <taxon>Pseudomonadati</taxon>
        <taxon>Pseudomonadota</taxon>
        <taxon>Gammaproteobacteria</taxon>
        <taxon>Enterobacterales</taxon>
        <taxon>Enterobacteriaceae</taxon>
        <taxon>Escherichia</taxon>
    </lineage>
</organism>